<organism>
    <name type="scientific">Rubrobacter xylanophilus (strain DSM 9941 / JCM 11954 / NBRC 16129 / PRD-1)</name>
    <dbReference type="NCBI Taxonomy" id="266117"/>
    <lineage>
        <taxon>Bacteria</taxon>
        <taxon>Bacillati</taxon>
        <taxon>Actinomycetota</taxon>
        <taxon>Rubrobacteria</taxon>
        <taxon>Rubrobacterales</taxon>
        <taxon>Rubrobacteraceae</taxon>
        <taxon>Rubrobacter</taxon>
    </lineage>
</organism>
<proteinExistence type="inferred from homology"/>
<gene>
    <name type="primary">acyP</name>
    <name type="ordered locus">Rxyl_0794</name>
</gene>
<sequence length="110" mass="12455">MCCRRVFRLSHRKEGMESARQTKRVRVYVSGRVQGVFFRDSTRERAERLGVSGWVRNLPDGRVEAVFEGEAGAVDELVRWCHEGPPHARVEGVEVEEEPASGGARGFEVR</sequence>
<feature type="chain" id="PRO_0000326791" description="Acylphosphatase">
    <location>
        <begin position="1"/>
        <end position="110"/>
    </location>
</feature>
<feature type="domain" description="Acylphosphatase-like" evidence="1">
    <location>
        <begin position="24"/>
        <end position="110"/>
    </location>
</feature>
<feature type="active site" evidence="1">
    <location>
        <position position="39"/>
    </location>
</feature>
<feature type="active site" evidence="1">
    <location>
        <position position="57"/>
    </location>
</feature>
<comment type="catalytic activity">
    <reaction>
        <text>an acyl phosphate + H2O = a carboxylate + phosphate + H(+)</text>
        <dbReference type="Rhea" id="RHEA:14965"/>
        <dbReference type="ChEBI" id="CHEBI:15377"/>
        <dbReference type="ChEBI" id="CHEBI:15378"/>
        <dbReference type="ChEBI" id="CHEBI:29067"/>
        <dbReference type="ChEBI" id="CHEBI:43474"/>
        <dbReference type="ChEBI" id="CHEBI:59918"/>
        <dbReference type="EC" id="3.6.1.7"/>
    </reaction>
</comment>
<comment type="similarity">
    <text evidence="2">Belongs to the acylphosphatase family.</text>
</comment>
<accession>Q1AXW6</accession>
<name>ACYP_RUBXD</name>
<keyword id="KW-0378">Hydrolase</keyword>
<keyword id="KW-1185">Reference proteome</keyword>
<dbReference type="EC" id="3.6.1.7"/>
<dbReference type="EMBL" id="CP000386">
    <property type="protein sequence ID" value="ABG03762.1"/>
    <property type="molecule type" value="Genomic_DNA"/>
</dbReference>
<dbReference type="SMR" id="Q1AXW6"/>
<dbReference type="STRING" id="266117.Rxyl_0794"/>
<dbReference type="KEGG" id="rxy:Rxyl_0794"/>
<dbReference type="eggNOG" id="COG1254">
    <property type="taxonomic scope" value="Bacteria"/>
</dbReference>
<dbReference type="HOGENOM" id="CLU_141932_2_1_11"/>
<dbReference type="PhylomeDB" id="Q1AXW6"/>
<dbReference type="Proteomes" id="UP000006637">
    <property type="component" value="Chromosome"/>
</dbReference>
<dbReference type="GO" id="GO:0003998">
    <property type="term" value="F:acylphosphatase activity"/>
    <property type="evidence" value="ECO:0007669"/>
    <property type="project" value="UniProtKB-EC"/>
</dbReference>
<dbReference type="Gene3D" id="3.30.70.100">
    <property type="match status" value="1"/>
</dbReference>
<dbReference type="InterPro" id="IPR020456">
    <property type="entry name" value="Acylphosphatase"/>
</dbReference>
<dbReference type="InterPro" id="IPR001792">
    <property type="entry name" value="Acylphosphatase-like_dom"/>
</dbReference>
<dbReference type="InterPro" id="IPR036046">
    <property type="entry name" value="Acylphosphatase-like_dom_sf"/>
</dbReference>
<dbReference type="InterPro" id="IPR017968">
    <property type="entry name" value="Acylphosphatase_CS"/>
</dbReference>
<dbReference type="NCBIfam" id="NF011014">
    <property type="entry name" value="PRK14442.1"/>
    <property type="match status" value="1"/>
</dbReference>
<dbReference type="NCBIfam" id="NF011016">
    <property type="entry name" value="PRK14444.1"/>
    <property type="match status" value="1"/>
</dbReference>
<dbReference type="PANTHER" id="PTHR47268">
    <property type="entry name" value="ACYLPHOSPHATASE"/>
    <property type="match status" value="1"/>
</dbReference>
<dbReference type="PANTHER" id="PTHR47268:SF4">
    <property type="entry name" value="ACYLPHOSPHATASE"/>
    <property type="match status" value="1"/>
</dbReference>
<dbReference type="Pfam" id="PF00708">
    <property type="entry name" value="Acylphosphatase"/>
    <property type="match status" value="1"/>
</dbReference>
<dbReference type="PRINTS" id="PR00112">
    <property type="entry name" value="ACYLPHPHTASE"/>
</dbReference>
<dbReference type="SUPFAM" id="SSF54975">
    <property type="entry name" value="Acylphosphatase/BLUF domain-like"/>
    <property type="match status" value="1"/>
</dbReference>
<dbReference type="PROSITE" id="PS00150">
    <property type="entry name" value="ACYLPHOSPHATASE_1"/>
    <property type="match status" value="1"/>
</dbReference>
<dbReference type="PROSITE" id="PS00151">
    <property type="entry name" value="ACYLPHOSPHATASE_2"/>
    <property type="match status" value="1"/>
</dbReference>
<dbReference type="PROSITE" id="PS51160">
    <property type="entry name" value="ACYLPHOSPHATASE_3"/>
    <property type="match status" value="1"/>
</dbReference>
<protein>
    <recommendedName>
        <fullName>Acylphosphatase</fullName>
        <ecNumber>3.6.1.7</ecNumber>
    </recommendedName>
    <alternativeName>
        <fullName>Acylphosphate phosphohydrolase</fullName>
    </alternativeName>
</protein>
<evidence type="ECO:0000255" key="1">
    <source>
        <dbReference type="PROSITE-ProRule" id="PRU00520"/>
    </source>
</evidence>
<evidence type="ECO:0000305" key="2"/>
<reference key="1">
    <citation type="submission" date="2006-06" db="EMBL/GenBank/DDBJ databases">
        <title>Complete sequence of Rubrobacter xylanophilus DSM 9941.</title>
        <authorList>
            <consortium name="US DOE Joint Genome Institute"/>
            <person name="Copeland A."/>
            <person name="Lucas S."/>
            <person name="Lapidus A."/>
            <person name="Barry K."/>
            <person name="Detter J.C."/>
            <person name="Glavina del Rio T."/>
            <person name="Hammon N."/>
            <person name="Israni S."/>
            <person name="Dalin E."/>
            <person name="Tice H."/>
            <person name="Pitluck S."/>
            <person name="Munk A.C."/>
            <person name="Brettin T."/>
            <person name="Bruce D."/>
            <person name="Han C."/>
            <person name="Tapia R."/>
            <person name="Gilna P."/>
            <person name="Schmutz J."/>
            <person name="Larimer F."/>
            <person name="Land M."/>
            <person name="Hauser L."/>
            <person name="Kyrpides N."/>
            <person name="Lykidis A."/>
            <person name="da Costa M.S."/>
            <person name="Rainey F.A."/>
            <person name="Empadinhas N."/>
            <person name="Jolivet E."/>
            <person name="Battista J.R."/>
            <person name="Richardson P."/>
        </authorList>
    </citation>
    <scope>NUCLEOTIDE SEQUENCE [LARGE SCALE GENOMIC DNA]</scope>
    <source>
        <strain>DSM 9941 / JCM 11954 / NBRC 16129 / PRD-1</strain>
    </source>
</reference>